<protein>
    <recommendedName>
        <fullName evidence="1">Large ribosomal subunit protein uL30</fullName>
    </recommendedName>
    <alternativeName>
        <fullName evidence="2">50S ribosomal protein L30</fullName>
    </alternativeName>
</protein>
<organism>
    <name type="scientific">Chlorobium phaeobacteroides (strain DSM 266 / SMG 266 / 2430)</name>
    <dbReference type="NCBI Taxonomy" id="290317"/>
    <lineage>
        <taxon>Bacteria</taxon>
        <taxon>Pseudomonadati</taxon>
        <taxon>Chlorobiota</taxon>
        <taxon>Chlorobiia</taxon>
        <taxon>Chlorobiales</taxon>
        <taxon>Chlorobiaceae</taxon>
        <taxon>Chlorobium/Pelodictyon group</taxon>
        <taxon>Chlorobium</taxon>
    </lineage>
</organism>
<gene>
    <name evidence="1" type="primary">rpmD</name>
    <name type="ordered locus">Cpha266_2405</name>
</gene>
<proteinExistence type="inferred from homology"/>
<evidence type="ECO:0000255" key="1">
    <source>
        <dbReference type="HAMAP-Rule" id="MF_01371"/>
    </source>
</evidence>
<evidence type="ECO:0000305" key="2"/>
<dbReference type="EMBL" id="CP000492">
    <property type="protein sequence ID" value="ABL66393.1"/>
    <property type="molecule type" value="Genomic_DNA"/>
</dbReference>
<dbReference type="RefSeq" id="WP_011746175.1">
    <property type="nucleotide sequence ID" value="NC_008639.1"/>
</dbReference>
<dbReference type="SMR" id="A1BJ16"/>
<dbReference type="STRING" id="290317.Cpha266_2405"/>
<dbReference type="KEGG" id="cph:Cpha266_2405"/>
<dbReference type="eggNOG" id="COG1841">
    <property type="taxonomic scope" value="Bacteria"/>
</dbReference>
<dbReference type="HOGENOM" id="CLU_131047_2_0_10"/>
<dbReference type="Proteomes" id="UP000008701">
    <property type="component" value="Chromosome"/>
</dbReference>
<dbReference type="GO" id="GO:0022625">
    <property type="term" value="C:cytosolic large ribosomal subunit"/>
    <property type="evidence" value="ECO:0007669"/>
    <property type="project" value="TreeGrafter"/>
</dbReference>
<dbReference type="GO" id="GO:0003735">
    <property type="term" value="F:structural constituent of ribosome"/>
    <property type="evidence" value="ECO:0007669"/>
    <property type="project" value="InterPro"/>
</dbReference>
<dbReference type="GO" id="GO:0006412">
    <property type="term" value="P:translation"/>
    <property type="evidence" value="ECO:0007669"/>
    <property type="project" value="UniProtKB-UniRule"/>
</dbReference>
<dbReference type="CDD" id="cd01658">
    <property type="entry name" value="Ribosomal_L30"/>
    <property type="match status" value="1"/>
</dbReference>
<dbReference type="FunFam" id="3.30.1390.20:FF:000001">
    <property type="entry name" value="50S ribosomal protein L30"/>
    <property type="match status" value="1"/>
</dbReference>
<dbReference type="Gene3D" id="3.30.1390.20">
    <property type="entry name" value="Ribosomal protein L30, ferredoxin-like fold domain"/>
    <property type="match status" value="1"/>
</dbReference>
<dbReference type="HAMAP" id="MF_01371_B">
    <property type="entry name" value="Ribosomal_uL30_B"/>
    <property type="match status" value="1"/>
</dbReference>
<dbReference type="InterPro" id="IPR036919">
    <property type="entry name" value="Ribo_uL30_ferredoxin-like_sf"/>
</dbReference>
<dbReference type="InterPro" id="IPR005996">
    <property type="entry name" value="Ribosomal_uL30_bac-type"/>
</dbReference>
<dbReference type="InterPro" id="IPR016082">
    <property type="entry name" value="Ribosomal_uL30_ferredoxin-like"/>
</dbReference>
<dbReference type="NCBIfam" id="TIGR01308">
    <property type="entry name" value="rpmD_bact"/>
    <property type="match status" value="1"/>
</dbReference>
<dbReference type="PANTHER" id="PTHR15892:SF2">
    <property type="entry name" value="LARGE RIBOSOMAL SUBUNIT PROTEIN UL30M"/>
    <property type="match status" value="1"/>
</dbReference>
<dbReference type="PANTHER" id="PTHR15892">
    <property type="entry name" value="MITOCHONDRIAL RIBOSOMAL PROTEIN L30"/>
    <property type="match status" value="1"/>
</dbReference>
<dbReference type="Pfam" id="PF00327">
    <property type="entry name" value="Ribosomal_L30"/>
    <property type="match status" value="1"/>
</dbReference>
<dbReference type="PIRSF" id="PIRSF002211">
    <property type="entry name" value="Ribosomal_L30_bac-type"/>
    <property type="match status" value="1"/>
</dbReference>
<dbReference type="SUPFAM" id="SSF55129">
    <property type="entry name" value="Ribosomal protein L30p/L7e"/>
    <property type="match status" value="1"/>
</dbReference>
<keyword id="KW-1185">Reference proteome</keyword>
<keyword id="KW-0687">Ribonucleoprotein</keyword>
<keyword id="KW-0689">Ribosomal protein</keyword>
<feature type="chain" id="PRO_1000056025" description="Large ribosomal subunit protein uL30">
    <location>
        <begin position="1"/>
        <end position="61"/>
    </location>
</feature>
<accession>A1BJ16</accession>
<name>RL30_CHLPD</name>
<sequence length="61" mass="6925">MSEKKLKITQVRSVIGSTKKQKATIKALGLGRPNYHVDKEDNPCLRGQIRVVQHLVKVEEQ</sequence>
<reference key="1">
    <citation type="submission" date="2006-12" db="EMBL/GenBank/DDBJ databases">
        <title>Complete sequence of Chlorobium phaeobacteroides DSM 266.</title>
        <authorList>
            <consortium name="US DOE Joint Genome Institute"/>
            <person name="Copeland A."/>
            <person name="Lucas S."/>
            <person name="Lapidus A."/>
            <person name="Barry K."/>
            <person name="Detter J.C."/>
            <person name="Glavina del Rio T."/>
            <person name="Hammon N."/>
            <person name="Israni S."/>
            <person name="Pitluck S."/>
            <person name="Goltsman E."/>
            <person name="Schmutz J."/>
            <person name="Larimer F."/>
            <person name="Land M."/>
            <person name="Hauser L."/>
            <person name="Mikhailova N."/>
            <person name="Li T."/>
            <person name="Overmann J."/>
            <person name="Bryant D.A."/>
            <person name="Richardson P."/>
        </authorList>
    </citation>
    <scope>NUCLEOTIDE SEQUENCE [LARGE SCALE GENOMIC DNA]</scope>
    <source>
        <strain>DSM 266 / SMG 266 / 2430</strain>
    </source>
</reference>
<comment type="subunit">
    <text evidence="1">Part of the 50S ribosomal subunit.</text>
</comment>
<comment type="similarity">
    <text evidence="1">Belongs to the universal ribosomal protein uL30 family.</text>
</comment>